<sequence>MIDVNNFHYMKIGLASPEKIRSWSFGEVKKPETINYRTLKPEKDGLFCERIFGPTKDWECSCGKYKRVRYKGMVCDRCGVEVTKSKVRRERMGHIELAAPVSHIWYFKGIPSRMGLLLDMSPRALEEVIYFASYVVVDPGPTGLEKKTLLSEAEFRDYYDKYPGQFVAKMGAEGIKDLLEEIDLDEELKLLRDELESATGQRLTRAIKRLEVVESFRNSGNKPSWMILDVLPIIPPEIRPMVQLDGGRFATSDLNDLYRRVINRNNRLKRLLDLGAPGIIVQNEKRMLQEAVDALIDNGRRGRPVTGPGNRPLKSLSHMLKGKQGRFRQNLLGKRVDYSGRSVIAVGPSLKMYQCGLPKEMALELFKPFVMKELVQREIATNIKNAKSKIERMDDEVWDVLEEVIREHPVLLNRAPTLHRLGIQAFEPTLVEGRAIRLHPLVTTAYNADFDGDQMAVHVPLSKEAQAEARMLMLAAQNILNPKDGKPVVTPSQDMVLGNYYLTLERKDAVNTGAIFNNTNEVLKAYANGFVHLHTRIGVHASSFNNPTFTEEQNKKILATSVGKIIFNEIIPDSFAYINEPTQENLERKTPNRYFIDPTTLGEGGLKEYFENEELIEPFNKKFLGNIIAEVFNRFSITDTSMMLDRMKDLGFKFSSKAGITVGVADIVVLPDKQQILDEHEKLVDRITKQFNRGLITEEERYNAVVEIWTDAKDQIQGELMQSLDKTNPIFMMSDSGARGNASNFTQLAGMRGLMAAPSGKIIELPITSSFREGLTVLEYFISTHGARKGLADTALKTADSGYLTRRLVDVAQDVIVREEDCGTDRGLLVSDIKEGTEMIEPFIERIEGRYSKETIRHPETDEIIIRPDELITPEIAKKITDAGIEQMYIRSAFTCNARHGVCEKCYGKNLATGEKVEVGEAVGTIAAQSIGEPGTQLTMRTFHTGGVAGSDITQGLPRIQEIFEARNPKGQAVITEIEGVVEDIKLAKDRQQEIVVKGANETRSYLASGTSRIIVEIGQPVQRGEVLTEGSIEPKNYLSVAGLNATESYLLKEVQKVYRMQGVEIDDKHVEVMVRQMLRKVRIIEAGDTKLLPGSLVDIHNFTDANREAFKHRKRPATAKPVLLGITKASLETESFLSAASFQETTRVLTDAAIKGKRDDLLGLKENVIIGKLIPAGTGMRRYSDVKYEKTAKPVAEVESQTEVTE</sequence>
<dbReference type="EC" id="2.7.7.6" evidence="1"/>
<dbReference type="EMBL" id="CP000046">
    <property type="protein sequence ID" value="AAW37699.1"/>
    <property type="molecule type" value="Genomic_DNA"/>
</dbReference>
<dbReference type="SMR" id="Q5HID2"/>
<dbReference type="KEGG" id="sac:SACOL0589"/>
<dbReference type="HOGENOM" id="CLU_000524_3_0_9"/>
<dbReference type="Proteomes" id="UP000000530">
    <property type="component" value="Chromosome"/>
</dbReference>
<dbReference type="GO" id="GO:0000428">
    <property type="term" value="C:DNA-directed RNA polymerase complex"/>
    <property type="evidence" value="ECO:0007669"/>
    <property type="project" value="UniProtKB-KW"/>
</dbReference>
<dbReference type="GO" id="GO:0003677">
    <property type="term" value="F:DNA binding"/>
    <property type="evidence" value="ECO:0007669"/>
    <property type="project" value="UniProtKB-UniRule"/>
</dbReference>
<dbReference type="GO" id="GO:0003899">
    <property type="term" value="F:DNA-directed RNA polymerase activity"/>
    <property type="evidence" value="ECO:0007669"/>
    <property type="project" value="UniProtKB-UniRule"/>
</dbReference>
<dbReference type="GO" id="GO:0000287">
    <property type="term" value="F:magnesium ion binding"/>
    <property type="evidence" value="ECO:0007669"/>
    <property type="project" value="UniProtKB-UniRule"/>
</dbReference>
<dbReference type="GO" id="GO:0008270">
    <property type="term" value="F:zinc ion binding"/>
    <property type="evidence" value="ECO:0007669"/>
    <property type="project" value="UniProtKB-UniRule"/>
</dbReference>
<dbReference type="GO" id="GO:0006351">
    <property type="term" value="P:DNA-templated transcription"/>
    <property type="evidence" value="ECO:0007669"/>
    <property type="project" value="UniProtKB-UniRule"/>
</dbReference>
<dbReference type="CDD" id="cd02655">
    <property type="entry name" value="RNAP_beta'_C"/>
    <property type="match status" value="1"/>
</dbReference>
<dbReference type="CDD" id="cd01609">
    <property type="entry name" value="RNAP_beta'_N"/>
    <property type="match status" value="1"/>
</dbReference>
<dbReference type="FunFam" id="1.10.132.30:FF:000003">
    <property type="entry name" value="DNA-directed RNA polymerase subunit beta"/>
    <property type="match status" value="1"/>
</dbReference>
<dbReference type="FunFam" id="1.10.150.390:FF:000002">
    <property type="entry name" value="DNA-directed RNA polymerase subunit beta"/>
    <property type="match status" value="1"/>
</dbReference>
<dbReference type="FunFam" id="4.10.860.120:FF:000001">
    <property type="entry name" value="DNA-directed RNA polymerase subunit beta"/>
    <property type="match status" value="1"/>
</dbReference>
<dbReference type="Gene3D" id="1.10.132.30">
    <property type="match status" value="1"/>
</dbReference>
<dbReference type="Gene3D" id="1.10.150.390">
    <property type="match status" value="1"/>
</dbReference>
<dbReference type="Gene3D" id="1.10.1790.20">
    <property type="match status" value="1"/>
</dbReference>
<dbReference type="Gene3D" id="1.10.40.90">
    <property type="match status" value="1"/>
</dbReference>
<dbReference type="Gene3D" id="2.40.40.20">
    <property type="match status" value="1"/>
</dbReference>
<dbReference type="Gene3D" id="2.40.50.100">
    <property type="match status" value="1"/>
</dbReference>
<dbReference type="Gene3D" id="4.10.860.120">
    <property type="entry name" value="RNA polymerase II, clamp domain"/>
    <property type="match status" value="1"/>
</dbReference>
<dbReference type="Gene3D" id="1.10.274.100">
    <property type="entry name" value="RNA polymerase Rpb1, domain 3"/>
    <property type="match status" value="1"/>
</dbReference>
<dbReference type="HAMAP" id="MF_01322">
    <property type="entry name" value="RNApol_bact_RpoC"/>
    <property type="match status" value="1"/>
</dbReference>
<dbReference type="InterPro" id="IPR045867">
    <property type="entry name" value="DNA-dir_RpoC_beta_prime"/>
</dbReference>
<dbReference type="InterPro" id="IPR012754">
    <property type="entry name" value="DNA-dir_RpoC_beta_prime_bact"/>
</dbReference>
<dbReference type="InterPro" id="IPR000722">
    <property type="entry name" value="RNA_pol_asu"/>
</dbReference>
<dbReference type="InterPro" id="IPR006592">
    <property type="entry name" value="RNA_pol_N"/>
</dbReference>
<dbReference type="InterPro" id="IPR007080">
    <property type="entry name" value="RNA_pol_Rpb1_1"/>
</dbReference>
<dbReference type="InterPro" id="IPR007066">
    <property type="entry name" value="RNA_pol_Rpb1_3"/>
</dbReference>
<dbReference type="InterPro" id="IPR042102">
    <property type="entry name" value="RNA_pol_Rpb1_3_sf"/>
</dbReference>
<dbReference type="InterPro" id="IPR007083">
    <property type="entry name" value="RNA_pol_Rpb1_4"/>
</dbReference>
<dbReference type="InterPro" id="IPR007081">
    <property type="entry name" value="RNA_pol_Rpb1_5"/>
</dbReference>
<dbReference type="InterPro" id="IPR044893">
    <property type="entry name" value="RNA_pol_Rpb1_clamp_domain"/>
</dbReference>
<dbReference type="InterPro" id="IPR038120">
    <property type="entry name" value="Rpb1_funnel_sf"/>
</dbReference>
<dbReference type="NCBIfam" id="TIGR02386">
    <property type="entry name" value="rpoC_TIGR"/>
    <property type="match status" value="1"/>
</dbReference>
<dbReference type="PANTHER" id="PTHR19376">
    <property type="entry name" value="DNA-DIRECTED RNA POLYMERASE"/>
    <property type="match status" value="1"/>
</dbReference>
<dbReference type="PANTHER" id="PTHR19376:SF54">
    <property type="entry name" value="DNA-DIRECTED RNA POLYMERASE SUBUNIT BETA"/>
    <property type="match status" value="1"/>
</dbReference>
<dbReference type="Pfam" id="PF04997">
    <property type="entry name" value="RNA_pol_Rpb1_1"/>
    <property type="match status" value="1"/>
</dbReference>
<dbReference type="Pfam" id="PF00623">
    <property type="entry name" value="RNA_pol_Rpb1_2"/>
    <property type="match status" value="1"/>
</dbReference>
<dbReference type="Pfam" id="PF04983">
    <property type="entry name" value="RNA_pol_Rpb1_3"/>
    <property type="match status" value="1"/>
</dbReference>
<dbReference type="Pfam" id="PF05000">
    <property type="entry name" value="RNA_pol_Rpb1_4"/>
    <property type="match status" value="1"/>
</dbReference>
<dbReference type="Pfam" id="PF04998">
    <property type="entry name" value="RNA_pol_Rpb1_5"/>
    <property type="match status" value="1"/>
</dbReference>
<dbReference type="SMART" id="SM00663">
    <property type="entry name" value="RPOLA_N"/>
    <property type="match status" value="1"/>
</dbReference>
<dbReference type="SUPFAM" id="SSF64484">
    <property type="entry name" value="beta and beta-prime subunits of DNA dependent RNA-polymerase"/>
    <property type="match status" value="1"/>
</dbReference>
<feature type="chain" id="PRO_0000067792" description="DNA-directed RNA polymerase subunit beta'">
    <location>
        <begin position="1"/>
        <end position="1207"/>
    </location>
</feature>
<feature type="binding site" evidence="1">
    <location>
        <position position="60"/>
    </location>
    <ligand>
        <name>Zn(2+)</name>
        <dbReference type="ChEBI" id="CHEBI:29105"/>
        <label>1</label>
    </ligand>
</feature>
<feature type="binding site" evidence="1">
    <location>
        <position position="62"/>
    </location>
    <ligand>
        <name>Zn(2+)</name>
        <dbReference type="ChEBI" id="CHEBI:29105"/>
        <label>1</label>
    </ligand>
</feature>
<feature type="binding site" evidence="1">
    <location>
        <position position="75"/>
    </location>
    <ligand>
        <name>Zn(2+)</name>
        <dbReference type="ChEBI" id="CHEBI:29105"/>
        <label>1</label>
    </ligand>
</feature>
<feature type="binding site" evidence="1">
    <location>
        <position position="78"/>
    </location>
    <ligand>
        <name>Zn(2+)</name>
        <dbReference type="ChEBI" id="CHEBI:29105"/>
        <label>1</label>
    </ligand>
</feature>
<feature type="binding site" evidence="1">
    <location>
        <position position="449"/>
    </location>
    <ligand>
        <name>Mg(2+)</name>
        <dbReference type="ChEBI" id="CHEBI:18420"/>
    </ligand>
</feature>
<feature type="binding site" evidence="1">
    <location>
        <position position="451"/>
    </location>
    <ligand>
        <name>Mg(2+)</name>
        <dbReference type="ChEBI" id="CHEBI:18420"/>
    </ligand>
</feature>
<feature type="binding site" evidence="1">
    <location>
        <position position="453"/>
    </location>
    <ligand>
        <name>Mg(2+)</name>
        <dbReference type="ChEBI" id="CHEBI:18420"/>
    </ligand>
</feature>
<feature type="binding site" evidence="1">
    <location>
        <position position="822"/>
    </location>
    <ligand>
        <name>Zn(2+)</name>
        <dbReference type="ChEBI" id="CHEBI:29105"/>
        <label>2</label>
    </ligand>
</feature>
<feature type="binding site" evidence="1">
    <location>
        <position position="896"/>
    </location>
    <ligand>
        <name>Zn(2+)</name>
        <dbReference type="ChEBI" id="CHEBI:29105"/>
        <label>2</label>
    </ligand>
</feature>
<feature type="binding site" evidence="1">
    <location>
        <position position="903"/>
    </location>
    <ligand>
        <name>Zn(2+)</name>
        <dbReference type="ChEBI" id="CHEBI:29105"/>
        <label>2</label>
    </ligand>
</feature>
<feature type="binding site" evidence="1">
    <location>
        <position position="906"/>
    </location>
    <ligand>
        <name>Zn(2+)</name>
        <dbReference type="ChEBI" id="CHEBI:29105"/>
        <label>2</label>
    </ligand>
</feature>
<keyword id="KW-0240">DNA-directed RNA polymerase</keyword>
<keyword id="KW-0460">Magnesium</keyword>
<keyword id="KW-0479">Metal-binding</keyword>
<keyword id="KW-0548">Nucleotidyltransferase</keyword>
<keyword id="KW-0804">Transcription</keyword>
<keyword id="KW-0808">Transferase</keyword>
<keyword id="KW-0862">Zinc</keyword>
<comment type="function">
    <text evidence="1">DNA-dependent RNA polymerase catalyzes the transcription of DNA into RNA using the four ribonucleoside triphosphates as substrates.</text>
</comment>
<comment type="catalytic activity">
    <reaction evidence="1">
        <text>RNA(n) + a ribonucleoside 5'-triphosphate = RNA(n+1) + diphosphate</text>
        <dbReference type="Rhea" id="RHEA:21248"/>
        <dbReference type="Rhea" id="RHEA-COMP:14527"/>
        <dbReference type="Rhea" id="RHEA-COMP:17342"/>
        <dbReference type="ChEBI" id="CHEBI:33019"/>
        <dbReference type="ChEBI" id="CHEBI:61557"/>
        <dbReference type="ChEBI" id="CHEBI:140395"/>
        <dbReference type="EC" id="2.7.7.6"/>
    </reaction>
</comment>
<comment type="cofactor">
    <cofactor evidence="1">
        <name>Mg(2+)</name>
        <dbReference type="ChEBI" id="CHEBI:18420"/>
    </cofactor>
    <text evidence="1">Binds 1 Mg(2+) ion per subunit.</text>
</comment>
<comment type="cofactor">
    <cofactor evidence="1">
        <name>Zn(2+)</name>
        <dbReference type="ChEBI" id="CHEBI:29105"/>
    </cofactor>
    <text evidence="1">Binds 2 Zn(2+) ions per subunit.</text>
</comment>
<comment type="subunit">
    <text evidence="1">The RNAP catalytic core consists of 2 alpha, 1 beta, 1 beta' and 1 omega subunit. When a sigma factor is associated with the core the holoenzyme is formed, which can initiate transcription.</text>
</comment>
<comment type="similarity">
    <text evidence="1">Belongs to the RNA polymerase beta' chain family.</text>
</comment>
<proteinExistence type="inferred from homology"/>
<accession>Q5HID2</accession>
<evidence type="ECO:0000255" key="1">
    <source>
        <dbReference type="HAMAP-Rule" id="MF_01322"/>
    </source>
</evidence>
<reference key="1">
    <citation type="journal article" date="2005" name="J. Bacteriol.">
        <title>Insights on evolution of virulence and resistance from the complete genome analysis of an early methicillin-resistant Staphylococcus aureus strain and a biofilm-producing methicillin-resistant Staphylococcus epidermidis strain.</title>
        <authorList>
            <person name="Gill S.R."/>
            <person name="Fouts D.E."/>
            <person name="Archer G.L."/>
            <person name="Mongodin E.F."/>
            <person name="DeBoy R.T."/>
            <person name="Ravel J."/>
            <person name="Paulsen I.T."/>
            <person name="Kolonay J.F."/>
            <person name="Brinkac L.M."/>
            <person name="Beanan M.J."/>
            <person name="Dodson R.J."/>
            <person name="Daugherty S.C."/>
            <person name="Madupu R."/>
            <person name="Angiuoli S.V."/>
            <person name="Durkin A.S."/>
            <person name="Haft D.H."/>
            <person name="Vamathevan J.J."/>
            <person name="Khouri H."/>
            <person name="Utterback T.R."/>
            <person name="Lee C."/>
            <person name="Dimitrov G."/>
            <person name="Jiang L."/>
            <person name="Qin H."/>
            <person name="Weidman J."/>
            <person name="Tran K."/>
            <person name="Kang K.H."/>
            <person name="Hance I.R."/>
            <person name="Nelson K.E."/>
            <person name="Fraser C.M."/>
        </authorList>
    </citation>
    <scope>NUCLEOTIDE SEQUENCE [LARGE SCALE GENOMIC DNA]</scope>
    <source>
        <strain>COL</strain>
    </source>
</reference>
<gene>
    <name evidence="1" type="primary">rpoC</name>
    <name type="ordered locus">SACOL0589</name>
</gene>
<protein>
    <recommendedName>
        <fullName evidence="1">DNA-directed RNA polymerase subunit beta'</fullName>
        <shortName evidence="1">RNAP subunit beta'</shortName>
        <ecNumber evidence="1">2.7.7.6</ecNumber>
    </recommendedName>
    <alternativeName>
        <fullName evidence="1">RNA polymerase subunit beta'</fullName>
    </alternativeName>
    <alternativeName>
        <fullName evidence="1">Transcriptase subunit beta'</fullName>
    </alternativeName>
</protein>
<organism>
    <name type="scientific">Staphylococcus aureus (strain COL)</name>
    <dbReference type="NCBI Taxonomy" id="93062"/>
    <lineage>
        <taxon>Bacteria</taxon>
        <taxon>Bacillati</taxon>
        <taxon>Bacillota</taxon>
        <taxon>Bacilli</taxon>
        <taxon>Bacillales</taxon>
        <taxon>Staphylococcaceae</taxon>
        <taxon>Staphylococcus</taxon>
    </lineage>
</organism>
<name>RPOC_STAAC</name>